<name>PYRG_BACCZ</name>
<gene>
    <name evidence="1" type="primary">pyrG</name>
    <name type="synonym">ctrA</name>
    <name type="ordered locus">BCE33L5038</name>
</gene>
<sequence length="535" mass="59781">MTKYIFVTGGVVSSLGKGITAASLGRLLKNRGLNVTIQKFDPYINVDPGTMSPYQHGEVFVTDDGAETDLDLGHYERFIDINLNKYSNVTTGKIYSSVLQKERRGEYLGGTVQVIPHITNEIKERVYRSGRETNADVVITEIGGTVGDIESLPFLEAIRQIKSDIGRDNVMYIHCTLIPYLKAAGEMKTKPTQHSVKELRSLGIQPNIIVVRTEMPVSQDMKDKLALFCDIDTKAVIEARDADTLYAVPLSLQEQNMDQIVCDHLKLDNPAADMTEWTALVEKVRNLSKKTKIALVGKYVELQDAYISVVEALRHAGYSFDTDVEVKWVNAEHVTAENVQELVGDTDGILVPGGFGDRGVEGKIVAIQYARENKVPFLGICLGMQLASIEFARNVLGLEGANSSEINPDTPYAIIDLLPEQKDVEDLGGTLRLGLYPCKLSEETNAYNAYNEPVVYERHRHRYEFNNQFRPDMEKAGFVFSGTSPDGRLVEIIELKDHPWFVAAQFHPELVSRPNRPQPLFHDFVRASITNKESK</sequence>
<organism>
    <name type="scientific">Bacillus cereus (strain ZK / E33L)</name>
    <dbReference type="NCBI Taxonomy" id="288681"/>
    <lineage>
        <taxon>Bacteria</taxon>
        <taxon>Bacillati</taxon>
        <taxon>Bacillota</taxon>
        <taxon>Bacilli</taxon>
        <taxon>Bacillales</taxon>
        <taxon>Bacillaceae</taxon>
        <taxon>Bacillus</taxon>
        <taxon>Bacillus cereus group</taxon>
    </lineage>
</organism>
<proteinExistence type="inferred from homology"/>
<feature type="chain" id="PRO_0000266059" description="CTP synthase">
    <location>
        <begin position="1"/>
        <end position="535"/>
    </location>
</feature>
<feature type="domain" description="Glutamine amidotransferase type-1" evidence="1">
    <location>
        <begin position="292"/>
        <end position="534"/>
    </location>
</feature>
<feature type="region of interest" description="Amidoligase domain" evidence="1">
    <location>
        <begin position="1"/>
        <end position="267"/>
    </location>
</feature>
<feature type="active site" description="Nucleophile; for glutamine hydrolysis" evidence="1">
    <location>
        <position position="381"/>
    </location>
</feature>
<feature type="active site" evidence="1">
    <location>
        <position position="507"/>
    </location>
</feature>
<feature type="active site" evidence="1">
    <location>
        <position position="509"/>
    </location>
</feature>
<feature type="binding site" evidence="1">
    <location>
        <position position="13"/>
    </location>
    <ligand>
        <name>CTP</name>
        <dbReference type="ChEBI" id="CHEBI:37563"/>
        <note>allosteric inhibitor</note>
    </ligand>
</feature>
<feature type="binding site" evidence="1">
    <location>
        <position position="13"/>
    </location>
    <ligand>
        <name>UTP</name>
        <dbReference type="ChEBI" id="CHEBI:46398"/>
    </ligand>
</feature>
<feature type="binding site" evidence="1">
    <location>
        <begin position="14"/>
        <end position="19"/>
    </location>
    <ligand>
        <name>ATP</name>
        <dbReference type="ChEBI" id="CHEBI:30616"/>
    </ligand>
</feature>
<feature type="binding site" evidence="1">
    <location>
        <position position="54"/>
    </location>
    <ligand>
        <name>L-glutamine</name>
        <dbReference type="ChEBI" id="CHEBI:58359"/>
    </ligand>
</feature>
<feature type="binding site" evidence="1">
    <location>
        <position position="71"/>
    </location>
    <ligand>
        <name>ATP</name>
        <dbReference type="ChEBI" id="CHEBI:30616"/>
    </ligand>
</feature>
<feature type="binding site" evidence="1">
    <location>
        <position position="71"/>
    </location>
    <ligand>
        <name>Mg(2+)</name>
        <dbReference type="ChEBI" id="CHEBI:18420"/>
    </ligand>
</feature>
<feature type="binding site" evidence="1">
    <location>
        <position position="141"/>
    </location>
    <ligand>
        <name>Mg(2+)</name>
        <dbReference type="ChEBI" id="CHEBI:18420"/>
    </ligand>
</feature>
<feature type="binding site" evidence="1">
    <location>
        <begin position="148"/>
        <end position="150"/>
    </location>
    <ligand>
        <name>CTP</name>
        <dbReference type="ChEBI" id="CHEBI:37563"/>
        <note>allosteric inhibitor</note>
    </ligand>
</feature>
<feature type="binding site" evidence="1">
    <location>
        <begin position="188"/>
        <end position="193"/>
    </location>
    <ligand>
        <name>CTP</name>
        <dbReference type="ChEBI" id="CHEBI:37563"/>
        <note>allosteric inhibitor</note>
    </ligand>
</feature>
<feature type="binding site" evidence="1">
    <location>
        <begin position="188"/>
        <end position="193"/>
    </location>
    <ligand>
        <name>UTP</name>
        <dbReference type="ChEBI" id="CHEBI:46398"/>
    </ligand>
</feature>
<feature type="binding site" evidence="1">
    <location>
        <position position="224"/>
    </location>
    <ligand>
        <name>CTP</name>
        <dbReference type="ChEBI" id="CHEBI:37563"/>
        <note>allosteric inhibitor</note>
    </ligand>
</feature>
<feature type="binding site" evidence="1">
    <location>
        <position position="224"/>
    </location>
    <ligand>
        <name>UTP</name>
        <dbReference type="ChEBI" id="CHEBI:46398"/>
    </ligand>
</feature>
<feature type="binding site" evidence="1">
    <location>
        <begin position="240"/>
        <end position="242"/>
    </location>
    <ligand>
        <name>ATP</name>
        <dbReference type="ChEBI" id="CHEBI:30616"/>
    </ligand>
</feature>
<feature type="binding site" evidence="1">
    <location>
        <position position="354"/>
    </location>
    <ligand>
        <name>L-glutamine</name>
        <dbReference type="ChEBI" id="CHEBI:58359"/>
    </ligand>
</feature>
<feature type="binding site" evidence="1">
    <location>
        <begin position="382"/>
        <end position="385"/>
    </location>
    <ligand>
        <name>L-glutamine</name>
        <dbReference type="ChEBI" id="CHEBI:58359"/>
    </ligand>
</feature>
<feature type="binding site" evidence="1">
    <location>
        <position position="405"/>
    </location>
    <ligand>
        <name>L-glutamine</name>
        <dbReference type="ChEBI" id="CHEBI:58359"/>
    </ligand>
</feature>
<feature type="binding site" evidence="1">
    <location>
        <position position="462"/>
    </location>
    <ligand>
        <name>L-glutamine</name>
        <dbReference type="ChEBI" id="CHEBI:58359"/>
    </ligand>
</feature>
<evidence type="ECO:0000255" key="1">
    <source>
        <dbReference type="HAMAP-Rule" id="MF_01227"/>
    </source>
</evidence>
<reference key="1">
    <citation type="journal article" date="2006" name="J. Bacteriol.">
        <title>Pathogenomic sequence analysis of Bacillus cereus and Bacillus thuringiensis isolates closely related to Bacillus anthracis.</title>
        <authorList>
            <person name="Han C.S."/>
            <person name="Xie G."/>
            <person name="Challacombe J.F."/>
            <person name="Altherr M.R."/>
            <person name="Bhotika S.S."/>
            <person name="Bruce D."/>
            <person name="Campbell C.S."/>
            <person name="Campbell M.L."/>
            <person name="Chen J."/>
            <person name="Chertkov O."/>
            <person name="Cleland C."/>
            <person name="Dimitrijevic M."/>
            <person name="Doggett N.A."/>
            <person name="Fawcett J.J."/>
            <person name="Glavina T."/>
            <person name="Goodwin L.A."/>
            <person name="Hill K.K."/>
            <person name="Hitchcock P."/>
            <person name="Jackson P.J."/>
            <person name="Keim P."/>
            <person name="Kewalramani A.R."/>
            <person name="Longmire J."/>
            <person name="Lucas S."/>
            <person name="Malfatti S."/>
            <person name="McMurry K."/>
            <person name="Meincke L.J."/>
            <person name="Misra M."/>
            <person name="Moseman B.L."/>
            <person name="Mundt M."/>
            <person name="Munk A.C."/>
            <person name="Okinaka R.T."/>
            <person name="Parson-Quintana B."/>
            <person name="Reilly L.P."/>
            <person name="Richardson P."/>
            <person name="Robinson D.L."/>
            <person name="Rubin E."/>
            <person name="Saunders E."/>
            <person name="Tapia R."/>
            <person name="Tesmer J.G."/>
            <person name="Thayer N."/>
            <person name="Thompson L.S."/>
            <person name="Tice H."/>
            <person name="Ticknor L.O."/>
            <person name="Wills P.L."/>
            <person name="Brettin T.S."/>
            <person name="Gilna P."/>
        </authorList>
    </citation>
    <scope>NUCLEOTIDE SEQUENCE [LARGE SCALE GENOMIC DNA]</scope>
    <source>
        <strain>ZK / E33L</strain>
    </source>
</reference>
<dbReference type="EC" id="6.3.4.2" evidence="1"/>
<dbReference type="EMBL" id="CP000001">
    <property type="protein sequence ID" value="AAU15242.1"/>
    <property type="molecule type" value="Genomic_DNA"/>
</dbReference>
<dbReference type="RefSeq" id="WP_000170457.1">
    <property type="nucleotide sequence ID" value="NZ_CP009968.1"/>
</dbReference>
<dbReference type="SMR" id="Q630R0"/>
<dbReference type="MEROPS" id="C26.964"/>
<dbReference type="GeneID" id="93005784"/>
<dbReference type="KEGG" id="bcz:BCE33L5038"/>
<dbReference type="PATRIC" id="fig|288681.22.peg.306"/>
<dbReference type="UniPathway" id="UPA00159">
    <property type="reaction ID" value="UER00277"/>
</dbReference>
<dbReference type="Proteomes" id="UP000002612">
    <property type="component" value="Chromosome"/>
</dbReference>
<dbReference type="GO" id="GO:0005829">
    <property type="term" value="C:cytosol"/>
    <property type="evidence" value="ECO:0007669"/>
    <property type="project" value="TreeGrafter"/>
</dbReference>
<dbReference type="GO" id="GO:0005524">
    <property type="term" value="F:ATP binding"/>
    <property type="evidence" value="ECO:0007669"/>
    <property type="project" value="UniProtKB-KW"/>
</dbReference>
<dbReference type="GO" id="GO:0003883">
    <property type="term" value="F:CTP synthase activity"/>
    <property type="evidence" value="ECO:0007669"/>
    <property type="project" value="UniProtKB-UniRule"/>
</dbReference>
<dbReference type="GO" id="GO:0004359">
    <property type="term" value="F:glutaminase activity"/>
    <property type="evidence" value="ECO:0007669"/>
    <property type="project" value="RHEA"/>
</dbReference>
<dbReference type="GO" id="GO:0042802">
    <property type="term" value="F:identical protein binding"/>
    <property type="evidence" value="ECO:0007669"/>
    <property type="project" value="TreeGrafter"/>
</dbReference>
<dbReference type="GO" id="GO:0046872">
    <property type="term" value="F:metal ion binding"/>
    <property type="evidence" value="ECO:0007669"/>
    <property type="project" value="UniProtKB-KW"/>
</dbReference>
<dbReference type="GO" id="GO:0044210">
    <property type="term" value="P:'de novo' CTP biosynthetic process"/>
    <property type="evidence" value="ECO:0007669"/>
    <property type="project" value="UniProtKB-UniRule"/>
</dbReference>
<dbReference type="GO" id="GO:0019856">
    <property type="term" value="P:pyrimidine nucleobase biosynthetic process"/>
    <property type="evidence" value="ECO:0007669"/>
    <property type="project" value="TreeGrafter"/>
</dbReference>
<dbReference type="CDD" id="cd03113">
    <property type="entry name" value="CTPS_N"/>
    <property type="match status" value="1"/>
</dbReference>
<dbReference type="CDD" id="cd01746">
    <property type="entry name" value="GATase1_CTP_Synthase"/>
    <property type="match status" value="1"/>
</dbReference>
<dbReference type="FunFam" id="3.40.50.300:FF:000009">
    <property type="entry name" value="CTP synthase"/>
    <property type="match status" value="1"/>
</dbReference>
<dbReference type="FunFam" id="3.40.50.880:FF:000002">
    <property type="entry name" value="CTP synthase"/>
    <property type="match status" value="1"/>
</dbReference>
<dbReference type="Gene3D" id="3.40.50.880">
    <property type="match status" value="1"/>
</dbReference>
<dbReference type="Gene3D" id="3.40.50.300">
    <property type="entry name" value="P-loop containing nucleotide triphosphate hydrolases"/>
    <property type="match status" value="1"/>
</dbReference>
<dbReference type="HAMAP" id="MF_01227">
    <property type="entry name" value="PyrG"/>
    <property type="match status" value="1"/>
</dbReference>
<dbReference type="InterPro" id="IPR029062">
    <property type="entry name" value="Class_I_gatase-like"/>
</dbReference>
<dbReference type="InterPro" id="IPR004468">
    <property type="entry name" value="CTP_synthase"/>
</dbReference>
<dbReference type="InterPro" id="IPR017456">
    <property type="entry name" value="CTP_synthase_N"/>
</dbReference>
<dbReference type="InterPro" id="IPR017926">
    <property type="entry name" value="GATASE"/>
</dbReference>
<dbReference type="InterPro" id="IPR033828">
    <property type="entry name" value="GATase1_CTP_Synthase"/>
</dbReference>
<dbReference type="InterPro" id="IPR027417">
    <property type="entry name" value="P-loop_NTPase"/>
</dbReference>
<dbReference type="NCBIfam" id="NF003792">
    <property type="entry name" value="PRK05380.1"/>
    <property type="match status" value="1"/>
</dbReference>
<dbReference type="NCBIfam" id="TIGR00337">
    <property type="entry name" value="PyrG"/>
    <property type="match status" value="1"/>
</dbReference>
<dbReference type="PANTHER" id="PTHR11550">
    <property type="entry name" value="CTP SYNTHASE"/>
    <property type="match status" value="1"/>
</dbReference>
<dbReference type="PANTHER" id="PTHR11550:SF0">
    <property type="entry name" value="CTP SYNTHASE-RELATED"/>
    <property type="match status" value="1"/>
</dbReference>
<dbReference type="Pfam" id="PF06418">
    <property type="entry name" value="CTP_synth_N"/>
    <property type="match status" value="1"/>
</dbReference>
<dbReference type="Pfam" id="PF00117">
    <property type="entry name" value="GATase"/>
    <property type="match status" value="1"/>
</dbReference>
<dbReference type="SUPFAM" id="SSF52317">
    <property type="entry name" value="Class I glutamine amidotransferase-like"/>
    <property type="match status" value="1"/>
</dbReference>
<dbReference type="SUPFAM" id="SSF52540">
    <property type="entry name" value="P-loop containing nucleoside triphosphate hydrolases"/>
    <property type="match status" value="1"/>
</dbReference>
<dbReference type="PROSITE" id="PS51273">
    <property type="entry name" value="GATASE_TYPE_1"/>
    <property type="match status" value="1"/>
</dbReference>
<accession>Q630R0</accession>
<comment type="function">
    <text evidence="1">Catalyzes the ATP-dependent amination of UTP to CTP with either L-glutamine or ammonia as the source of nitrogen. Regulates intracellular CTP levels through interactions with the four ribonucleotide triphosphates.</text>
</comment>
<comment type="catalytic activity">
    <reaction evidence="1">
        <text>UTP + L-glutamine + ATP + H2O = CTP + L-glutamate + ADP + phosphate + 2 H(+)</text>
        <dbReference type="Rhea" id="RHEA:26426"/>
        <dbReference type="ChEBI" id="CHEBI:15377"/>
        <dbReference type="ChEBI" id="CHEBI:15378"/>
        <dbReference type="ChEBI" id="CHEBI:29985"/>
        <dbReference type="ChEBI" id="CHEBI:30616"/>
        <dbReference type="ChEBI" id="CHEBI:37563"/>
        <dbReference type="ChEBI" id="CHEBI:43474"/>
        <dbReference type="ChEBI" id="CHEBI:46398"/>
        <dbReference type="ChEBI" id="CHEBI:58359"/>
        <dbReference type="ChEBI" id="CHEBI:456216"/>
        <dbReference type="EC" id="6.3.4.2"/>
    </reaction>
</comment>
<comment type="catalytic activity">
    <reaction evidence="1">
        <text>L-glutamine + H2O = L-glutamate + NH4(+)</text>
        <dbReference type="Rhea" id="RHEA:15889"/>
        <dbReference type="ChEBI" id="CHEBI:15377"/>
        <dbReference type="ChEBI" id="CHEBI:28938"/>
        <dbReference type="ChEBI" id="CHEBI:29985"/>
        <dbReference type="ChEBI" id="CHEBI:58359"/>
    </reaction>
</comment>
<comment type="catalytic activity">
    <reaction evidence="1">
        <text>UTP + NH4(+) + ATP = CTP + ADP + phosphate + 2 H(+)</text>
        <dbReference type="Rhea" id="RHEA:16597"/>
        <dbReference type="ChEBI" id="CHEBI:15378"/>
        <dbReference type="ChEBI" id="CHEBI:28938"/>
        <dbReference type="ChEBI" id="CHEBI:30616"/>
        <dbReference type="ChEBI" id="CHEBI:37563"/>
        <dbReference type="ChEBI" id="CHEBI:43474"/>
        <dbReference type="ChEBI" id="CHEBI:46398"/>
        <dbReference type="ChEBI" id="CHEBI:456216"/>
    </reaction>
</comment>
<comment type="activity regulation">
    <text evidence="1">Allosterically activated by GTP, when glutamine is the substrate; GTP has no effect on the reaction when ammonia is the substrate. The allosteric effector GTP functions by stabilizing the protein conformation that binds the tetrahedral intermediate(s) formed during glutamine hydrolysis. Inhibited by the product CTP, via allosteric rather than competitive inhibition.</text>
</comment>
<comment type="pathway">
    <text evidence="1">Pyrimidine metabolism; CTP biosynthesis via de novo pathway; CTP from UDP: step 2/2.</text>
</comment>
<comment type="subunit">
    <text evidence="1">Homotetramer.</text>
</comment>
<comment type="miscellaneous">
    <text evidence="1">CTPSs have evolved a hybrid strategy for distinguishing between UTP and CTP. The overlapping regions of the product feedback inhibitory and substrate sites recognize a common feature in both compounds, the triphosphate moiety. To differentiate isosteric substrate and product pyrimidine rings, an additional pocket far from the expected kinase/ligase catalytic site, specifically recognizes the cytosine and ribose portions of the product inhibitor.</text>
</comment>
<comment type="similarity">
    <text evidence="1">Belongs to the CTP synthase family.</text>
</comment>
<protein>
    <recommendedName>
        <fullName evidence="1">CTP synthase</fullName>
        <ecNumber evidence="1">6.3.4.2</ecNumber>
    </recommendedName>
    <alternativeName>
        <fullName evidence="1">Cytidine 5'-triphosphate synthase</fullName>
    </alternativeName>
    <alternativeName>
        <fullName evidence="1">Cytidine triphosphate synthetase</fullName>
        <shortName evidence="1">CTP synthetase</shortName>
        <shortName evidence="1">CTPS</shortName>
    </alternativeName>
    <alternativeName>
        <fullName evidence="1">UTP--ammonia ligase</fullName>
    </alternativeName>
</protein>
<keyword id="KW-0067">ATP-binding</keyword>
<keyword id="KW-0315">Glutamine amidotransferase</keyword>
<keyword id="KW-0436">Ligase</keyword>
<keyword id="KW-0460">Magnesium</keyword>
<keyword id="KW-0479">Metal-binding</keyword>
<keyword id="KW-0547">Nucleotide-binding</keyword>
<keyword id="KW-0665">Pyrimidine biosynthesis</keyword>